<feature type="chain" id="PRO_0000267588" description="Type III pantothenate kinase">
    <location>
        <begin position="1"/>
        <end position="260"/>
    </location>
</feature>
<feature type="active site" description="Proton acceptor" evidence="1">
    <location>
        <position position="109"/>
    </location>
</feature>
<feature type="binding site" evidence="1">
    <location>
        <begin position="6"/>
        <end position="13"/>
    </location>
    <ligand>
        <name>ATP</name>
        <dbReference type="ChEBI" id="CHEBI:30616"/>
    </ligand>
</feature>
<feature type="binding site" evidence="1">
    <location>
        <begin position="107"/>
        <end position="110"/>
    </location>
    <ligand>
        <name>substrate</name>
    </ligand>
</feature>
<feature type="binding site" evidence="1">
    <location>
        <position position="129"/>
    </location>
    <ligand>
        <name>K(+)</name>
        <dbReference type="ChEBI" id="CHEBI:29103"/>
    </ligand>
</feature>
<feature type="binding site" evidence="1">
    <location>
        <position position="132"/>
    </location>
    <ligand>
        <name>ATP</name>
        <dbReference type="ChEBI" id="CHEBI:30616"/>
    </ligand>
</feature>
<feature type="binding site" evidence="1">
    <location>
        <position position="184"/>
    </location>
    <ligand>
        <name>substrate</name>
    </ligand>
</feature>
<dbReference type="EC" id="2.7.1.33" evidence="1"/>
<dbReference type="EMBL" id="CP000377">
    <property type="protein sequence ID" value="ABF63495.1"/>
    <property type="molecule type" value="Genomic_DNA"/>
</dbReference>
<dbReference type="RefSeq" id="WP_011538107.1">
    <property type="nucleotide sequence ID" value="NC_008044.1"/>
</dbReference>
<dbReference type="SMR" id="Q1GIM1"/>
<dbReference type="STRING" id="292414.TM1040_0762"/>
<dbReference type="KEGG" id="sit:TM1040_0762"/>
<dbReference type="eggNOG" id="COG1521">
    <property type="taxonomic scope" value="Bacteria"/>
</dbReference>
<dbReference type="HOGENOM" id="CLU_066627_1_0_5"/>
<dbReference type="OrthoDB" id="9804707at2"/>
<dbReference type="UniPathway" id="UPA00241">
    <property type="reaction ID" value="UER00352"/>
</dbReference>
<dbReference type="Proteomes" id="UP000000636">
    <property type="component" value="Chromosome"/>
</dbReference>
<dbReference type="GO" id="GO:0005737">
    <property type="term" value="C:cytoplasm"/>
    <property type="evidence" value="ECO:0007669"/>
    <property type="project" value="UniProtKB-SubCell"/>
</dbReference>
<dbReference type="GO" id="GO:0005524">
    <property type="term" value="F:ATP binding"/>
    <property type="evidence" value="ECO:0007669"/>
    <property type="project" value="UniProtKB-UniRule"/>
</dbReference>
<dbReference type="GO" id="GO:0046872">
    <property type="term" value="F:metal ion binding"/>
    <property type="evidence" value="ECO:0007669"/>
    <property type="project" value="UniProtKB-KW"/>
</dbReference>
<dbReference type="GO" id="GO:0004594">
    <property type="term" value="F:pantothenate kinase activity"/>
    <property type="evidence" value="ECO:0007669"/>
    <property type="project" value="UniProtKB-UniRule"/>
</dbReference>
<dbReference type="GO" id="GO:0015937">
    <property type="term" value="P:coenzyme A biosynthetic process"/>
    <property type="evidence" value="ECO:0007669"/>
    <property type="project" value="UniProtKB-UniRule"/>
</dbReference>
<dbReference type="CDD" id="cd24015">
    <property type="entry name" value="ASKHA_NBD_PanK-III"/>
    <property type="match status" value="1"/>
</dbReference>
<dbReference type="Gene3D" id="3.30.420.40">
    <property type="match status" value="2"/>
</dbReference>
<dbReference type="HAMAP" id="MF_01274">
    <property type="entry name" value="Pantothen_kinase_3"/>
    <property type="match status" value="1"/>
</dbReference>
<dbReference type="InterPro" id="IPR043129">
    <property type="entry name" value="ATPase_NBD"/>
</dbReference>
<dbReference type="InterPro" id="IPR004619">
    <property type="entry name" value="Type_III_PanK"/>
</dbReference>
<dbReference type="NCBIfam" id="TIGR00671">
    <property type="entry name" value="baf"/>
    <property type="match status" value="1"/>
</dbReference>
<dbReference type="NCBIfam" id="NF009844">
    <property type="entry name" value="PRK13318.1-2"/>
    <property type="match status" value="1"/>
</dbReference>
<dbReference type="NCBIfam" id="NF009848">
    <property type="entry name" value="PRK13318.1-6"/>
    <property type="match status" value="1"/>
</dbReference>
<dbReference type="NCBIfam" id="NF009855">
    <property type="entry name" value="PRK13321.1"/>
    <property type="match status" value="1"/>
</dbReference>
<dbReference type="PANTHER" id="PTHR34265">
    <property type="entry name" value="TYPE III PANTOTHENATE KINASE"/>
    <property type="match status" value="1"/>
</dbReference>
<dbReference type="PANTHER" id="PTHR34265:SF1">
    <property type="entry name" value="TYPE III PANTOTHENATE KINASE"/>
    <property type="match status" value="1"/>
</dbReference>
<dbReference type="Pfam" id="PF03309">
    <property type="entry name" value="Pan_kinase"/>
    <property type="match status" value="1"/>
</dbReference>
<dbReference type="SUPFAM" id="SSF53067">
    <property type="entry name" value="Actin-like ATPase domain"/>
    <property type="match status" value="2"/>
</dbReference>
<name>COAX_RUEST</name>
<proteinExistence type="inferred from homology"/>
<comment type="function">
    <text evidence="1">Catalyzes the phosphorylation of pantothenate (Pan), the first step in CoA biosynthesis.</text>
</comment>
<comment type="catalytic activity">
    <reaction evidence="1">
        <text>(R)-pantothenate + ATP = (R)-4'-phosphopantothenate + ADP + H(+)</text>
        <dbReference type="Rhea" id="RHEA:16373"/>
        <dbReference type="ChEBI" id="CHEBI:10986"/>
        <dbReference type="ChEBI" id="CHEBI:15378"/>
        <dbReference type="ChEBI" id="CHEBI:29032"/>
        <dbReference type="ChEBI" id="CHEBI:30616"/>
        <dbReference type="ChEBI" id="CHEBI:456216"/>
        <dbReference type="EC" id="2.7.1.33"/>
    </reaction>
</comment>
<comment type="cofactor">
    <cofactor evidence="1">
        <name>NH4(+)</name>
        <dbReference type="ChEBI" id="CHEBI:28938"/>
    </cofactor>
    <cofactor evidence="1">
        <name>K(+)</name>
        <dbReference type="ChEBI" id="CHEBI:29103"/>
    </cofactor>
    <text evidence="1">A monovalent cation. Ammonium or potassium.</text>
</comment>
<comment type="pathway">
    <text evidence="1">Cofactor biosynthesis; coenzyme A biosynthesis; CoA from (R)-pantothenate: step 1/5.</text>
</comment>
<comment type="subunit">
    <text evidence="1">Homodimer.</text>
</comment>
<comment type="subcellular location">
    <subcellularLocation>
        <location evidence="1">Cytoplasm</location>
    </subcellularLocation>
</comment>
<comment type="similarity">
    <text evidence="1">Belongs to the type III pantothenate kinase family.</text>
</comment>
<organism>
    <name type="scientific">Ruegeria sp. (strain TM1040)</name>
    <name type="common">Silicibacter sp.</name>
    <dbReference type="NCBI Taxonomy" id="292414"/>
    <lineage>
        <taxon>Bacteria</taxon>
        <taxon>Pseudomonadati</taxon>
        <taxon>Pseudomonadota</taxon>
        <taxon>Alphaproteobacteria</taxon>
        <taxon>Rhodobacterales</taxon>
        <taxon>Roseobacteraceae</taxon>
        <taxon>Ruegeria</taxon>
    </lineage>
</organism>
<sequence length="260" mass="28339">MLLAVDCGNTNTVFALWDGDQMIGHWRTSTEWQRTADQYYVWLSTLMNLQGIKAQITDMIISSTVPRVVFNLRVLSDRYFNTRPLVVGKPECALPVDVRVDEGTTVGPDRLVNTVAGYEKYGGDLIVVDFGTATTFDVVAADGAYVGGVIAPGVNLSLEALHHAAAALPHVDISKPQNVIGTNTVACMQSGVFWGYVGLVREICDRIKAESGVPMKVISTGGLAPLFQQTADLFDAYEDDLTMQGLRRIHEHNKDIGNHA</sequence>
<keyword id="KW-0067">ATP-binding</keyword>
<keyword id="KW-0173">Coenzyme A biosynthesis</keyword>
<keyword id="KW-0963">Cytoplasm</keyword>
<keyword id="KW-0418">Kinase</keyword>
<keyword id="KW-0479">Metal-binding</keyword>
<keyword id="KW-0547">Nucleotide-binding</keyword>
<keyword id="KW-0630">Potassium</keyword>
<keyword id="KW-1185">Reference proteome</keyword>
<keyword id="KW-0808">Transferase</keyword>
<reference key="1">
    <citation type="submission" date="2006-05" db="EMBL/GenBank/DDBJ databases">
        <title>Complete sequence of chromosome of Silicibacter sp. TM1040.</title>
        <authorList>
            <consortium name="US DOE Joint Genome Institute"/>
            <person name="Copeland A."/>
            <person name="Lucas S."/>
            <person name="Lapidus A."/>
            <person name="Barry K."/>
            <person name="Detter J.C."/>
            <person name="Glavina del Rio T."/>
            <person name="Hammon N."/>
            <person name="Israni S."/>
            <person name="Dalin E."/>
            <person name="Tice H."/>
            <person name="Pitluck S."/>
            <person name="Brettin T."/>
            <person name="Bruce D."/>
            <person name="Han C."/>
            <person name="Tapia R."/>
            <person name="Goodwin L."/>
            <person name="Thompson L.S."/>
            <person name="Gilna P."/>
            <person name="Schmutz J."/>
            <person name="Larimer F."/>
            <person name="Land M."/>
            <person name="Hauser L."/>
            <person name="Kyrpides N."/>
            <person name="Kim E."/>
            <person name="Belas R."/>
            <person name="Moran M.A."/>
            <person name="Buchan A."/>
            <person name="Gonzalez J.M."/>
            <person name="Schell M.A."/>
            <person name="Sun F."/>
            <person name="Richardson P."/>
        </authorList>
    </citation>
    <scope>NUCLEOTIDE SEQUENCE [LARGE SCALE GENOMIC DNA]</scope>
    <source>
        <strain>TM1040</strain>
    </source>
</reference>
<accession>Q1GIM1</accession>
<evidence type="ECO:0000255" key="1">
    <source>
        <dbReference type="HAMAP-Rule" id="MF_01274"/>
    </source>
</evidence>
<protein>
    <recommendedName>
        <fullName evidence="1">Type III pantothenate kinase</fullName>
        <ecNumber evidence="1">2.7.1.33</ecNumber>
    </recommendedName>
    <alternativeName>
        <fullName evidence="1">PanK-III</fullName>
    </alternativeName>
    <alternativeName>
        <fullName evidence="1">Pantothenic acid kinase</fullName>
    </alternativeName>
</protein>
<gene>
    <name evidence="1" type="primary">coaX</name>
    <name type="ordered locus">TM1040_0762</name>
</gene>